<dbReference type="EC" id="6.3.5.2" evidence="1"/>
<dbReference type="EMBL" id="CP000056">
    <property type="protein sequence ID" value="AAX72004.1"/>
    <property type="molecule type" value="Genomic_DNA"/>
</dbReference>
<dbReference type="RefSeq" id="WP_009880616.1">
    <property type="nucleotide sequence ID" value="NC_007296.2"/>
</dbReference>
<dbReference type="SMR" id="Q48TF6"/>
<dbReference type="MEROPS" id="C26.957"/>
<dbReference type="KEGG" id="spb:M28_Spy0891"/>
<dbReference type="HOGENOM" id="CLU_014340_0_5_9"/>
<dbReference type="UniPathway" id="UPA00189">
    <property type="reaction ID" value="UER00296"/>
</dbReference>
<dbReference type="GO" id="GO:0005829">
    <property type="term" value="C:cytosol"/>
    <property type="evidence" value="ECO:0007669"/>
    <property type="project" value="TreeGrafter"/>
</dbReference>
<dbReference type="GO" id="GO:0005524">
    <property type="term" value="F:ATP binding"/>
    <property type="evidence" value="ECO:0007669"/>
    <property type="project" value="UniProtKB-UniRule"/>
</dbReference>
<dbReference type="GO" id="GO:0003921">
    <property type="term" value="F:GMP synthase activity"/>
    <property type="evidence" value="ECO:0007669"/>
    <property type="project" value="InterPro"/>
</dbReference>
<dbReference type="CDD" id="cd01742">
    <property type="entry name" value="GATase1_GMP_Synthase"/>
    <property type="match status" value="1"/>
</dbReference>
<dbReference type="CDD" id="cd01997">
    <property type="entry name" value="GMP_synthase_C"/>
    <property type="match status" value="1"/>
</dbReference>
<dbReference type="FunFam" id="3.30.300.10:FF:000002">
    <property type="entry name" value="GMP synthase [glutamine-hydrolyzing]"/>
    <property type="match status" value="1"/>
</dbReference>
<dbReference type="FunFam" id="3.40.50.620:FF:000001">
    <property type="entry name" value="GMP synthase [glutamine-hydrolyzing]"/>
    <property type="match status" value="1"/>
</dbReference>
<dbReference type="FunFam" id="3.40.50.880:FF:000001">
    <property type="entry name" value="GMP synthase [glutamine-hydrolyzing]"/>
    <property type="match status" value="1"/>
</dbReference>
<dbReference type="Gene3D" id="3.30.300.10">
    <property type="match status" value="1"/>
</dbReference>
<dbReference type="Gene3D" id="3.40.50.880">
    <property type="match status" value="1"/>
</dbReference>
<dbReference type="Gene3D" id="3.40.50.620">
    <property type="entry name" value="HUPs"/>
    <property type="match status" value="1"/>
</dbReference>
<dbReference type="HAMAP" id="MF_00344">
    <property type="entry name" value="GMP_synthase"/>
    <property type="match status" value="1"/>
</dbReference>
<dbReference type="InterPro" id="IPR029062">
    <property type="entry name" value="Class_I_gatase-like"/>
</dbReference>
<dbReference type="InterPro" id="IPR017926">
    <property type="entry name" value="GATASE"/>
</dbReference>
<dbReference type="InterPro" id="IPR001674">
    <property type="entry name" value="GMP_synth_C"/>
</dbReference>
<dbReference type="InterPro" id="IPR004739">
    <property type="entry name" value="GMP_synth_GATase"/>
</dbReference>
<dbReference type="InterPro" id="IPR022955">
    <property type="entry name" value="GMP_synthase"/>
</dbReference>
<dbReference type="InterPro" id="IPR025777">
    <property type="entry name" value="GMPS_ATP_PPase_dom"/>
</dbReference>
<dbReference type="InterPro" id="IPR022310">
    <property type="entry name" value="NAD/GMP_synthase"/>
</dbReference>
<dbReference type="InterPro" id="IPR014729">
    <property type="entry name" value="Rossmann-like_a/b/a_fold"/>
</dbReference>
<dbReference type="NCBIfam" id="TIGR00884">
    <property type="entry name" value="guaA_Cterm"/>
    <property type="match status" value="1"/>
</dbReference>
<dbReference type="NCBIfam" id="TIGR00888">
    <property type="entry name" value="guaA_Nterm"/>
    <property type="match status" value="1"/>
</dbReference>
<dbReference type="NCBIfam" id="NF000848">
    <property type="entry name" value="PRK00074.1"/>
    <property type="match status" value="1"/>
</dbReference>
<dbReference type="PANTHER" id="PTHR11922:SF2">
    <property type="entry name" value="GMP SYNTHASE [GLUTAMINE-HYDROLYZING]"/>
    <property type="match status" value="1"/>
</dbReference>
<dbReference type="PANTHER" id="PTHR11922">
    <property type="entry name" value="GMP SYNTHASE-RELATED"/>
    <property type="match status" value="1"/>
</dbReference>
<dbReference type="Pfam" id="PF00117">
    <property type="entry name" value="GATase"/>
    <property type="match status" value="1"/>
</dbReference>
<dbReference type="Pfam" id="PF00958">
    <property type="entry name" value="GMP_synt_C"/>
    <property type="match status" value="1"/>
</dbReference>
<dbReference type="Pfam" id="PF02540">
    <property type="entry name" value="NAD_synthase"/>
    <property type="match status" value="1"/>
</dbReference>
<dbReference type="PRINTS" id="PR00097">
    <property type="entry name" value="ANTSNTHASEII"/>
</dbReference>
<dbReference type="PRINTS" id="PR00099">
    <property type="entry name" value="CPSGATASE"/>
</dbReference>
<dbReference type="PRINTS" id="PR00096">
    <property type="entry name" value="GATASE"/>
</dbReference>
<dbReference type="SUPFAM" id="SSF52402">
    <property type="entry name" value="Adenine nucleotide alpha hydrolases-like"/>
    <property type="match status" value="1"/>
</dbReference>
<dbReference type="SUPFAM" id="SSF52317">
    <property type="entry name" value="Class I glutamine amidotransferase-like"/>
    <property type="match status" value="1"/>
</dbReference>
<dbReference type="SUPFAM" id="SSF54810">
    <property type="entry name" value="GMP synthetase C-terminal dimerisation domain"/>
    <property type="match status" value="1"/>
</dbReference>
<dbReference type="PROSITE" id="PS51273">
    <property type="entry name" value="GATASE_TYPE_1"/>
    <property type="match status" value="1"/>
</dbReference>
<dbReference type="PROSITE" id="PS51553">
    <property type="entry name" value="GMPS_ATP_PPASE"/>
    <property type="match status" value="1"/>
</dbReference>
<reference key="1">
    <citation type="journal article" date="2005" name="J. Infect. Dis.">
        <title>Genome sequence of a serotype M28 strain of group A Streptococcus: potential new insights into puerperal sepsis and bacterial disease specificity.</title>
        <authorList>
            <person name="Green N.M."/>
            <person name="Zhang S."/>
            <person name="Porcella S.F."/>
            <person name="Nagiec M.J."/>
            <person name="Barbian K.D."/>
            <person name="Beres S.B."/>
            <person name="Lefebvre R.B."/>
            <person name="Musser J.M."/>
        </authorList>
    </citation>
    <scope>NUCLEOTIDE SEQUENCE [LARGE SCALE GENOMIC DNA]</scope>
    <source>
        <strain>MGAS6180</strain>
    </source>
</reference>
<gene>
    <name evidence="1" type="primary">guaA</name>
    <name type="ordered locus">M28_Spy0891</name>
</gene>
<sequence>MTEISILNDVQKIIVLDYGSQYNQLIARRIREFGVFSELKSHKITAQELREINPIGIVLSGGPNSVYADNAFGIDPEIFELGIPILGICYGMQLITHKLGGKVVPAGQAGNREYGQSTLHLRETSKLFSGTPQEQLVLMSHGDAVTEIPEGFHLVGDSNDCPYAAIENTEKNLYGIQFHPEVRHSVYGNDILKNFAISICGARGDWSMDNFIDMEIAKIRETVGDRKVLLGLSGGVDSSVVGVLLQKAIGDQLTCIFVDHGLLRKDEGDQVMGMLGGKFGLNIIRVDASKRFLDLLADVEDPEKKRKIIGNEFVYVFDDEASKLKGVDFLAQGTLYTDIIESGTETAQTIKSHHNVGGLPEDMQFELIEPLNTLFKDEVRALGIALGMPEEIVWRQPFPGPGLAIRVMGAITEEKLETVRESDAILREEIAKAGLDRDVWQYFTVNTGVRSVGVMGDGRTYDYTIAIRAITSIDGMTADFAQLPWDVLKKISTRIVNEVDHVNRIVYDITSKPPATVEWE</sequence>
<protein>
    <recommendedName>
        <fullName evidence="1">GMP synthase [glutamine-hydrolyzing]</fullName>
        <ecNumber evidence="1">6.3.5.2</ecNumber>
    </recommendedName>
    <alternativeName>
        <fullName evidence="1">GMP synthetase</fullName>
    </alternativeName>
    <alternativeName>
        <fullName evidence="1">Glutamine amidotransferase</fullName>
    </alternativeName>
</protein>
<name>GUAA_STRPM</name>
<accession>Q48TF6</accession>
<comment type="function">
    <text evidence="1">Catalyzes the synthesis of GMP from XMP.</text>
</comment>
<comment type="catalytic activity">
    <reaction evidence="1">
        <text>XMP + L-glutamine + ATP + H2O = GMP + L-glutamate + AMP + diphosphate + 2 H(+)</text>
        <dbReference type="Rhea" id="RHEA:11680"/>
        <dbReference type="ChEBI" id="CHEBI:15377"/>
        <dbReference type="ChEBI" id="CHEBI:15378"/>
        <dbReference type="ChEBI" id="CHEBI:29985"/>
        <dbReference type="ChEBI" id="CHEBI:30616"/>
        <dbReference type="ChEBI" id="CHEBI:33019"/>
        <dbReference type="ChEBI" id="CHEBI:57464"/>
        <dbReference type="ChEBI" id="CHEBI:58115"/>
        <dbReference type="ChEBI" id="CHEBI:58359"/>
        <dbReference type="ChEBI" id="CHEBI:456215"/>
        <dbReference type="EC" id="6.3.5.2"/>
    </reaction>
</comment>
<comment type="pathway">
    <text evidence="1">Purine metabolism; GMP biosynthesis; GMP from XMP (L-Gln route): step 1/1.</text>
</comment>
<comment type="subunit">
    <text evidence="1">Homodimer.</text>
</comment>
<feature type="chain" id="PRO_0000229475" description="GMP synthase [glutamine-hydrolyzing]">
    <location>
        <begin position="1"/>
        <end position="520"/>
    </location>
</feature>
<feature type="domain" description="Glutamine amidotransferase type-1" evidence="1">
    <location>
        <begin position="12"/>
        <end position="205"/>
    </location>
</feature>
<feature type="domain" description="GMPS ATP-PPase" evidence="1">
    <location>
        <begin position="206"/>
        <end position="395"/>
    </location>
</feature>
<feature type="active site" description="Nucleophile" evidence="1">
    <location>
        <position position="89"/>
    </location>
</feature>
<feature type="active site" evidence="1">
    <location>
        <position position="179"/>
    </location>
</feature>
<feature type="active site" evidence="1">
    <location>
        <position position="181"/>
    </location>
</feature>
<feature type="binding site" evidence="1">
    <location>
        <begin position="233"/>
        <end position="239"/>
    </location>
    <ligand>
        <name>ATP</name>
        <dbReference type="ChEBI" id="CHEBI:30616"/>
    </ligand>
</feature>
<organism>
    <name type="scientific">Streptococcus pyogenes serotype M28 (strain MGAS6180)</name>
    <dbReference type="NCBI Taxonomy" id="319701"/>
    <lineage>
        <taxon>Bacteria</taxon>
        <taxon>Bacillati</taxon>
        <taxon>Bacillota</taxon>
        <taxon>Bacilli</taxon>
        <taxon>Lactobacillales</taxon>
        <taxon>Streptococcaceae</taxon>
        <taxon>Streptococcus</taxon>
    </lineage>
</organism>
<evidence type="ECO:0000255" key="1">
    <source>
        <dbReference type="HAMAP-Rule" id="MF_00344"/>
    </source>
</evidence>
<keyword id="KW-0067">ATP-binding</keyword>
<keyword id="KW-0315">Glutamine amidotransferase</keyword>
<keyword id="KW-0332">GMP biosynthesis</keyword>
<keyword id="KW-0436">Ligase</keyword>
<keyword id="KW-0547">Nucleotide-binding</keyword>
<keyword id="KW-0658">Purine biosynthesis</keyword>
<proteinExistence type="inferred from homology"/>